<reference key="1">
    <citation type="submission" date="2008-06" db="EMBL/GenBank/DDBJ databases">
        <authorList>
            <consortium name="NIH - Xenopus Gene Collection (XGC) project"/>
        </authorList>
    </citation>
    <scope>NUCLEOTIDE SEQUENCE [LARGE SCALE MRNA]</scope>
    <source>
        <tissue>Embryo</tissue>
    </source>
</reference>
<proteinExistence type="evidence at transcript level"/>
<organism>
    <name type="scientific">Xenopus tropicalis</name>
    <name type="common">Western clawed frog</name>
    <name type="synonym">Silurana tropicalis</name>
    <dbReference type="NCBI Taxonomy" id="8364"/>
    <lineage>
        <taxon>Eukaryota</taxon>
        <taxon>Metazoa</taxon>
        <taxon>Chordata</taxon>
        <taxon>Craniata</taxon>
        <taxon>Vertebrata</taxon>
        <taxon>Euteleostomi</taxon>
        <taxon>Amphibia</taxon>
        <taxon>Batrachia</taxon>
        <taxon>Anura</taxon>
        <taxon>Pipoidea</taxon>
        <taxon>Pipidae</taxon>
        <taxon>Xenopodinae</taxon>
        <taxon>Xenopus</taxon>
        <taxon>Silurana</taxon>
    </lineage>
</organism>
<name>NDK6_XENTR</name>
<dbReference type="EC" id="2.7.4.6"/>
<dbReference type="EMBL" id="BC167315">
    <property type="protein sequence ID" value="AAI67315.1"/>
    <property type="molecule type" value="mRNA"/>
</dbReference>
<dbReference type="RefSeq" id="NP_001123709.1">
    <property type="nucleotide sequence ID" value="NM_001130237.1"/>
</dbReference>
<dbReference type="RefSeq" id="XP_012814101.1">
    <property type="nucleotide sequence ID" value="XM_012958647.3"/>
</dbReference>
<dbReference type="RefSeq" id="XP_017947439.1">
    <property type="nucleotide sequence ID" value="XM_018091950.2"/>
</dbReference>
<dbReference type="SMR" id="B3DL53"/>
<dbReference type="FunCoup" id="B3DL53">
    <property type="interactions" value="2346"/>
</dbReference>
<dbReference type="STRING" id="8364.ENSXETP00000038638"/>
<dbReference type="PaxDb" id="8364-ENSXETP00000034257"/>
<dbReference type="GeneID" id="100170458"/>
<dbReference type="KEGG" id="xtr:100170458"/>
<dbReference type="AGR" id="Xenbase:XB-GENE-969918"/>
<dbReference type="CTD" id="10201"/>
<dbReference type="Xenbase" id="XB-GENE-969918">
    <property type="gene designation" value="nme6"/>
</dbReference>
<dbReference type="eggNOG" id="KOG0888">
    <property type="taxonomic scope" value="Eukaryota"/>
</dbReference>
<dbReference type="HOGENOM" id="CLU_060216_8_0_1"/>
<dbReference type="InParanoid" id="B3DL53"/>
<dbReference type="OMA" id="WRKEECQ"/>
<dbReference type="OrthoDB" id="25346at2759"/>
<dbReference type="PhylomeDB" id="B3DL53"/>
<dbReference type="TreeFam" id="TF354225"/>
<dbReference type="Proteomes" id="UP000008143">
    <property type="component" value="Chromosome 3"/>
</dbReference>
<dbReference type="Bgee" id="ENSXETG00000015714">
    <property type="expression patterns" value="Expressed in egg cell and 12 other cell types or tissues"/>
</dbReference>
<dbReference type="GO" id="GO:0005524">
    <property type="term" value="F:ATP binding"/>
    <property type="evidence" value="ECO:0007669"/>
    <property type="project" value="UniProtKB-KW"/>
</dbReference>
<dbReference type="GO" id="GO:0046872">
    <property type="term" value="F:metal ion binding"/>
    <property type="evidence" value="ECO:0007669"/>
    <property type="project" value="UniProtKB-KW"/>
</dbReference>
<dbReference type="GO" id="GO:0004550">
    <property type="term" value="F:nucleoside diphosphate kinase activity"/>
    <property type="evidence" value="ECO:0007669"/>
    <property type="project" value="UniProtKB-EC"/>
</dbReference>
<dbReference type="GO" id="GO:0006241">
    <property type="term" value="P:CTP biosynthetic process"/>
    <property type="evidence" value="ECO:0007669"/>
    <property type="project" value="InterPro"/>
</dbReference>
<dbReference type="GO" id="GO:0006183">
    <property type="term" value="P:GTP biosynthetic process"/>
    <property type="evidence" value="ECO:0007669"/>
    <property type="project" value="InterPro"/>
</dbReference>
<dbReference type="GO" id="GO:0006228">
    <property type="term" value="P:UTP biosynthetic process"/>
    <property type="evidence" value="ECO:0007669"/>
    <property type="project" value="InterPro"/>
</dbReference>
<dbReference type="CDD" id="cd04414">
    <property type="entry name" value="NDPk6"/>
    <property type="match status" value="1"/>
</dbReference>
<dbReference type="FunFam" id="3.30.70.141:FF:000006">
    <property type="entry name" value="Nucleoside diphosphate kinase"/>
    <property type="match status" value="1"/>
</dbReference>
<dbReference type="Gene3D" id="3.30.70.141">
    <property type="entry name" value="Nucleoside diphosphate kinase-like domain"/>
    <property type="match status" value="1"/>
</dbReference>
<dbReference type="InterPro" id="IPR034907">
    <property type="entry name" value="NDK-like_dom"/>
</dbReference>
<dbReference type="InterPro" id="IPR036850">
    <property type="entry name" value="NDK-like_dom_sf"/>
</dbReference>
<dbReference type="InterPro" id="IPR037994">
    <property type="entry name" value="NDPk6"/>
</dbReference>
<dbReference type="InterPro" id="IPR001564">
    <property type="entry name" value="Nucleoside_diP_kinase"/>
</dbReference>
<dbReference type="InterPro" id="IPR023005">
    <property type="entry name" value="Nucleoside_diP_kinase_AS"/>
</dbReference>
<dbReference type="PANTHER" id="PTHR46956">
    <property type="entry name" value="NUCLEOSIDE DIPHOSPHATE KINASE 6"/>
    <property type="match status" value="1"/>
</dbReference>
<dbReference type="PANTHER" id="PTHR46956:SF1">
    <property type="entry name" value="NUCLEOSIDE DIPHOSPHATE KINASE 6"/>
    <property type="match status" value="1"/>
</dbReference>
<dbReference type="Pfam" id="PF00334">
    <property type="entry name" value="NDK"/>
    <property type="match status" value="1"/>
</dbReference>
<dbReference type="PRINTS" id="PR01243">
    <property type="entry name" value="NUCDPKINASE"/>
</dbReference>
<dbReference type="SMART" id="SM00562">
    <property type="entry name" value="NDK"/>
    <property type="match status" value="1"/>
</dbReference>
<dbReference type="SUPFAM" id="SSF54919">
    <property type="entry name" value="Nucleoside diphosphate kinase, NDK"/>
    <property type="match status" value="1"/>
</dbReference>
<dbReference type="PROSITE" id="PS00469">
    <property type="entry name" value="NDPK"/>
    <property type="match status" value="1"/>
</dbReference>
<dbReference type="PROSITE" id="PS51374">
    <property type="entry name" value="NDPK_LIKE"/>
    <property type="match status" value="1"/>
</dbReference>
<comment type="function">
    <text>Major role in the synthesis of nucleoside triphosphates other than ATP. The ATP gamma phosphate is transferred to the NDP beta phosphate via a ping-pong mechanism, using a phosphorylated active-site intermediate.</text>
</comment>
<comment type="catalytic activity">
    <reaction evidence="2">
        <text>a 2'-deoxyribonucleoside 5'-diphosphate + ATP = a 2'-deoxyribonucleoside 5'-triphosphate + ADP</text>
        <dbReference type="Rhea" id="RHEA:44640"/>
        <dbReference type="ChEBI" id="CHEBI:30616"/>
        <dbReference type="ChEBI" id="CHEBI:61560"/>
        <dbReference type="ChEBI" id="CHEBI:73316"/>
        <dbReference type="ChEBI" id="CHEBI:456216"/>
        <dbReference type="EC" id="2.7.4.6"/>
    </reaction>
</comment>
<comment type="catalytic activity">
    <reaction evidence="2">
        <text>a ribonucleoside 5'-diphosphate + ATP = a ribonucleoside 5'-triphosphate + ADP</text>
        <dbReference type="Rhea" id="RHEA:18113"/>
        <dbReference type="ChEBI" id="CHEBI:30616"/>
        <dbReference type="ChEBI" id="CHEBI:57930"/>
        <dbReference type="ChEBI" id="CHEBI:61557"/>
        <dbReference type="ChEBI" id="CHEBI:456216"/>
        <dbReference type="EC" id="2.7.4.6"/>
    </reaction>
</comment>
<comment type="cofactor">
    <cofactor evidence="1">
        <name>Mg(2+)</name>
        <dbReference type="ChEBI" id="CHEBI:18420"/>
    </cofactor>
</comment>
<comment type="similarity">
    <text evidence="3">Belongs to the NDK family.</text>
</comment>
<evidence type="ECO:0000250" key="1"/>
<evidence type="ECO:0000255" key="2">
    <source>
        <dbReference type="PROSITE-ProRule" id="PRU10030"/>
    </source>
</evidence>
<evidence type="ECO:0000305" key="3"/>
<feature type="chain" id="PRO_0000369547" description="Nucleoside diphosphate kinase 6">
    <location>
        <begin position="1"/>
        <end position="179"/>
    </location>
</feature>
<feature type="active site" description="Pros-phosphohistidine intermediate" evidence="2">
    <location>
        <position position="128"/>
    </location>
</feature>
<feature type="binding site" evidence="1">
    <location>
        <position position="18"/>
    </location>
    <ligand>
        <name>ATP</name>
        <dbReference type="ChEBI" id="CHEBI:30616"/>
    </ligand>
</feature>
<feature type="binding site" evidence="1">
    <location>
        <position position="67"/>
    </location>
    <ligand>
        <name>ATP</name>
        <dbReference type="ChEBI" id="CHEBI:30616"/>
    </ligand>
</feature>
<feature type="binding site" evidence="1">
    <location>
        <position position="95"/>
    </location>
    <ligand>
        <name>ATP</name>
        <dbReference type="ChEBI" id="CHEBI:30616"/>
    </ligand>
</feature>
<feature type="binding site" evidence="1">
    <location>
        <position position="101"/>
    </location>
    <ligand>
        <name>ATP</name>
        <dbReference type="ChEBI" id="CHEBI:30616"/>
    </ligand>
</feature>
<feature type="binding site" evidence="1">
    <location>
        <position position="115"/>
    </location>
    <ligand>
        <name>ATP</name>
        <dbReference type="ChEBI" id="CHEBI:30616"/>
    </ligand>
</feature>
<feature type="binding site" evidence="1">
    <location>
        <position position="125"/>
    </location>
    <ligand>
        <name>ATP</name>
        <dbReference type="ChEBI" id="CHEBI:30616"/>
    </ligand>
</feature>
<protein>
    <recommendedName>
        <fullName>Nucleoside diphosphate kinase 6</fullName>
        <shortName>NDK 6</shortName>
        <shortName>NDP kinase 6</shortName>
        <ecNumber>2.7.4.6</ecNumber>
    </recommendedName>
</protein>
<accession>B3DL53</accession>
<sequence length="179" mass="21027">MSSFRWVRPLQLTLALIKPDAVANPVISEAVHQKILENNFLIIRHKELHWRSTDSQRFYCEHKGRFFYQRLVEFMSSGPMQAYILAHEDAVQLWRNLMGPTKVFRARIVAPGTVRGDLGLTDTRNTTHGSDSVESACREITFFFPEFNTSDWYEKQEPRYRTGPVFYDEERSEHRLEGE</sequence>
<gene>
    <name type="primary">nme6</name>
</gene>
<keyword id="KW-0067">ATP-binding</keyword>
<keyword id="KW-0418">Kinase</keyword>
<keyword id="KW-0460">Magnesium</keyword>
<keyword id="KW-0479">Metal-binding</keyword>
<keyword id="KW-0546">Nucleotide metabolism</keyword>
<keyword id="KW-0547">Nucleotide-binding</keyword>
<keyword id="KW-1185">Reference proteome</keyword>
<keyword id="KW-0808">Transferase</keyword>